<dbReference type="EMBL" id="AE015451">
    <property type="protein sequence ID" value="AAN66948.1"/>
    <property type="molecule type" value="Genomic_DNA"/>
</dbReference>
<dbReference type="RefSeq" id="NP_743484.1">
    <property type="nucleotide sequence ID" value="NC_002947.4"/>
</dbReference>
<dbReference type="SMR" id="Q88N88"/>
<dbReference type="STRING" id="160488.PP_1324"/>
<dbReference type="PaxDb" id="160488-PP_1324"/>
<dbReference type="KEGG" id="ppu:PP_1324"/>
<dbReference type="PATRIC" id="fig|160488.4.peg.1403"/>
<dbReference type="eggNOG" id="COG0792">
    <property type="taxonomic scope" value="Bacteria"/>
</dbReference>
<dbReference type="HOGENOM" id="CLU_115353_1_0_6"/>
<dbReference type="OrthoDB" id="9794876at2"/>
<dbReference type="PhylomeDB" id="Q88N88"/>
<dbReference type="BioCyc" id="PPUT160488:G1G01-1411-MONOMER"/>
<dbReference type="Proteomes" id="UP000000556">
    <property type="component" value="Chromosome"/>
</dbReference>
<dbReference type="GO" id="GO:0003676">
    <property type="term" value="F:nucleic acid binding"/>
    <property type="evidence" value="ECO:0007669"/>
    <property type="project" value="InterPro"/>
</dbReference>
<dbReference type="CDD" id="cd20736">
    <property type="entry name" value="PoNe_Nuclease"/>
    <property type="match status" value="1"/>
</dbReference>
<dbReference type="Gene3D" id="3.40.1350.10">
    <property type="match status" value="1"/>
</dbReference>
<dbReference type="HAMAP" id="MF_00048">
    <property type="entry name" value="UPF0102"/>
    <property type="match status" value="1"/>
</dbReference>
<dbReference type="InterPro" id="IPR011335">
    <property type="entry name" value="Restrct_endonuc-II-like"/>
</dbReference>
<dbReference type="InterPro" id="IPR011856">
    <property type="entry name" value="tRNA_endonuc-like_dom_sf"/>
</dbReference>
<dbReference type="InterPro" id="IPR003509">
    <property type="entry name" value="UPF0102_YraN-like"/>
</dbReference>
<dbReference type="NCBIfam" id="NF009150">
    <property type="entry name" value="PRK12497.1-3"/>
    <property type="match status" value="1"/>
</dbReference>
<dbReference type="NCBIfam" id="TIGR00252">
    <property type="entry name" value="YraN family protein"/>
    <property type="match status" value="1"/>
</dbReference>
<dbReference type="PANTHER" id="PTHR34039">
    <property type="entry name" value="UPF0102 PROTEIN YRAN"/>
    <property type="match status" value="1"/>
</dbReference>
<dbReference type="PANTHER" id="PTHR34039:SF1">
    <property type="entry name" value="UPF0102 PROTEIN YRAN"/>
    <property type="match status" value="1"/>
</dbReference>
<dbReference type="Pfam" id="PF02021">
    <property type="entry name" value="UPF0102"/>
    <property type="match status" value="1"/>
</dbReference>
<dbReference type="SUPFAM" id="SSF52980">
    <property type="entry name" value="Restriction endonuclease-like"/>
    <property type="match status" value="1"/>
</dbReference>
<feature type="chain" id="PRO_0000167371" description="UPF0102 protein PP_1324">
    <location>
        <begin position="1"/>
        <end position="124"/>
    </location>
</feature>
<keyword id="KW-1185">Reference proteome</keyword>
<reference key="1">
    <citation type="journal article" date="2002" name="Environ. Microbiol.">
        <title>Complete genome sequence and comparative analysis of the metabolically versatile Pseudomonas putida KT2440.</title>
        <authorList>
            <person name="Nelson K.E."/>
            <person name="Weinel C."/>
            <person name="Paulsen I.T."/>
            <person name="Dodson R.J."/>
            <person name="Hilbert H."/>
            <person name="Martins dos Santos V.A.P."/>
            <person name="Fouts D.E."/>
            <person name="Gill S.R."/>
            <person name="Pop M."/>
            <person name="Holmes M."/>
            <person name="Brinkac L.M."/>
            <person name="Beanan M.J."/>
            <person name="DeBoy R.T."/>
            <person name="Daugherty S.C."/>
            <person name="Kolonay J.F."/>
            <person name="Madupu R."/>
            <person name="Nelson W.C."/>
            <person name="White O."/>
            <person name="Peterson J.D."/>
            <person name="Khouri H.M."/>
            <person name="Hance I."/>
            <person name="Chris Lee P."/>
            <person name="Holtzapple E.K."/>
            <person name="Scanlan D."/>
            <person name="Tran K."/>
            <person name="Moazzez A."/>
            <person name="Utterback T.R."/>
            <person name="Rizzo M."/>
            <person name="Lee K."/>
            <person name="Kosack D."/>
            <person name="Moestl D."/>
            <person name="Wedler H."/>
            <person name="Lauber J."/>
            <person name="Stjepandic D."/>
            <person name="Hoheisel J."/>
            <person name="Straetz M."/>
            <person name="Heim S."/>
            <person name="Kiewitz C."/>
            <person name="Eisen J.A."/>
            <person name="Timmis K.N."/>
            <person name="Duesterhoeft A."/>
            <person name="Tuemmler B."/>
            <person name="Fraser C.M."/>
        </authorList>
    </citation>
    <scope>NUCLEOTIDE SEQUENCE [LARGE SCALE GENOMIC DNA]</scope>
    <source>
        <strain>ATCC 47054 / DSM 6125 / CFBP 8728 / NCIMB 11950 / KT2440</strain>
    </source>
</reference>
<protein>
    <recommendedName>
        <fullName evidence="1">UPF0102 protein PP_1324</fullName>
    </recommendedName>
</protein>
<organism>
    <name type="scientific">Pseudomonas putida (strain ATCC 47054 / DSM 6125 / CFBP 8728 / NCIMB 11950 / KT2440)</name>
    <dbReference type="NCBI Taxonomy" id="160488"/>
    <lineage>
        <taxon>Bacteria</taxon>
        <taxon>Pseudomonadati</taxon>
        <taxon>Pseudomonadota</taxon>
        <taxon>Gammaproteobacteria</taxon>
        <taxon>Pseudomonadales</taxon>
        <taxon>Pseudomonadaceae</taxon>
        <taxon>Pseudomonas</taxon>
    </lineage>
</organism>
<name>Y1324_PSEPK</name>
<gene>
    <name type="ordered locus">PP_1324</name>
</gene>
<evidence type="ECO:0000255" key="1">
    <source>
        <dbReference type="HAMAP-Rule" id="MF_00048"/>
    </source>
</evidence>
<proteinExistence type="inferred from homology"/>
<comment type="similarity">
    <text evidence="1">Belongs to the UPF0102 family.</text>
</comment>
<sequence>MMAAASPTRAGQAAETQALEYLQGQGLQLLARNWRCKGGELDLVMLDADTVVFVEVRYRLHAGFGGALDSIDGRKQKRLVLAATLFLQKEAHWGNYPCRFDVVALQGSHHAGRPLQWLKNAFEC</sequence>
<accession>Q88N88</accession>